<gene>
    <name evidence="1" type="primary">miaB</name>
    <name type="ordered locus">SMGWSS_194</name>
</gene>
<sequence>MIKKKFYIENYGCQMNISDSEIVSSILNNKGFIKTENLKEANIILINTCSIRDKSEKKILLRINQIKFIIKKNNDILIGILGCMAYKFKNIKEKKLINLVVGPDSYREIPNLINNFFKKKGEYISTSFSKTETYADIIPKREEKKITAFVTIMRGCDNMCTFCVVPFTRGREKSRDPYSIIKECKFLFKKGYKEIILLGQNVDSYLWYGGGLKKKFKIKEIKNEEIINFSKLLELVAISVPLMRIRFCTSNPNDMSDNVLNVIKKYINICKHIHLPVQSGSNRILSLMNRKHTCEDYILLINKIKNIIPNCSLSCDIITGFCNENENDHNETLNLMNYVKYNFSYMFIYSHRIGTYAYKKLIDNVSLSTKKRRLTEIINLQKTHSYYRNRKYIGSIQDILIEGISTKNINFFYGRNSGNDIVIFPKKNYKIGDFIKVKINNCTSATLVGDIYV</sequence>
<comment type="function">
    <text evidence="1">Catalyzes the methylthiolation of N6-(dimethylallyl)adenosine (i(6)A), leading to the formation of 2-methylthio-N6-(dimethylallyl)adenosine (ms(2)i(6)A) at position 37 in tRNAs that read codons beginning with uridine.</text>
</comment>
<comment type="catalytic activity">
    <reaction evidence="1">
        <text>N(6)-dimethylallyladenosine(37) in tRNA + (sulfur carrier)-SH + AH2 + 2 S-adenosyl-L-methionine = 2-methylsulfanyl-N(6)-dimethylallyladenosine(37) in tRNA + (sulfur carrier)-H + 5'-deoxyadenosine + L-methionine + A + S-adenosyl-L-homocysteine + 2 H(+)</text>
        <dbReference type="Rhea" id="RHEA:37067"/>
        <dbReference type="Rhea" id="RHEA-COMP:10375"/>
        <dbReference type="Rhea" id="RHEA-COMP:10376"/>
        <dbReference type="Rhea" id="RHEA-COMP:14737"/>
        <dbReference type="Rhea" id="RHEA-COMP:14739"/>
        <dbReference type="ChEBI" id="CHEBI:13193"/>
        <dbReference type="ChEBI" id="CHEBI:15378"/>
        <dbReference type="ChEBI" id="CHEBI:17319"/>
        <dbReference type="ChEBI" id="CHEBI:17499"/>
        <dbReference type="ChEBI" id="CHEBI:29917"/>
        <dbReference type="ChEBI" id="CHEBI:57844"/>
        <dbReference type="ChEBI" id="CHEBI:57856"/>
        <dbReference type="ChEBI" id="CHEBI:59789"/>
        <dbReference type="ChEBI" id="CHEBI:64428"/>
        <dbReference type="ChEBI" id="CHEBI:74415"/>
        <dbReference type="ChEBI" id="CHEBI:74417"/>
        <dbReference type="EC" id="2.8.4.3"/>
    </reaction>
</comment>
<comment type="cofactor">
    <cofactor evidence="1">
        <name>[4Fe-4S] cluster</name>
        <dbReference type="ChEBI" id="CHEBI:49883"/>
    </cofactor>
    <text evidence="1">Binds 2 [4Fe-4S] clusters. One cluster is coordinated with 3 cysteines and an exchangeable S-adenosyl-L-methionine.</text>
</comment>
<comment type="subunit">
    <text evidence="1">Monomer.</text>
</comment>
<comment type="subcellular location">
    <subcellularLocation>
        <location evidence="1">Cytoplasm</location>
    </subcellularLocation>
</comment>
<comment type="similarity">
    <text evidence="1">Belongs to the methylthiotransferase family. MiaB subfamily.</text>
</comment>
<protein>
    <recommendedName>
        <fullName evidence="1">tRNA-2-methylthio-N(6)-dimethylallyladenosine synthase</fullName>
        <ecNumber evidence="1">2.8.4.3</ecNumber>
    </recommendedName>
    <alternativeName>
        <fullName evidence="1">(Dimethylallyl)adenosine tRNA methylthiotransferase MiaB</fullName>
    </alternativeName>
    <alternativeName>
        <fullName evidence="1">tRNA-i(6)A37 methylthiotransferase</fullName>
    </alternativeName>
</protein>
<feature type="chain" id="PRO_0000374587" description="tRNA-2-methylthio-N(6)-dimethylallyladenosine synthase">
    <location>
        <begin position="1"/>
        <end position="453"/>
    </location>
</feature>
<feature type="domain" description="MTTase N-terminal" evidence="1">
    <location>
        <begin position="4"/>
        <end position="118"/>
    </location>
</feature>
<feature type="domain" description="Radical SAM core" evidence="2">
    <location>
        <begin position="142"/>
        <end position="388"/>
    </location>
</feature>
<feature type="domain" description="TRAM" evidence="1">
    <location>
        <begin position="390"/>
        <end position="453"/>
    </location>
</feature>
<feature type="binding site" evidence="1">
    <location>
        <position position="13"/>
    </location>
    <ligand>
        <name>[4Fe-4S] cluster</name>
        <dbReference type="ChEBI" id="CHEBI:49883"/>
        <label>1</label>
    </ligand>
</feature>
<feature type="binding site" evidence="1">
    <location>
        <position position="49"/>
    </location>
    <ligand>
        <name>[4Fe-4S] cluster</name>
        <dbReference type="ChEBI" id="CHEBI:49883"/>
        <label>1</label>
    </ligand>
</feature>
<feature type="binding site" evidence="1">
    <location>
        <position position="83"/>
    </location>
    <ligand>
        <name>[4Fe-4S] cluster</name>
        <dbReference type="ChEBI" id="CHEBI:49883"/>
        <label>1</label>
    </ligand>
</feature>
<feature type="binding site" evidence="1">
    <location>
        <position position="156"/>
    </location>
    <ligand>
        <name>[4Fe-4S] cluster</name>
        <dbReference type="ChEBI" id="CHEBI:49883"/>
        <label>2</label>
        <note>4Fe-4S-S-AdoMet</note>
    </ligand>
</feature>
<feature type="binding site" evidence="1">
    <location>
        <position position="160"/>
    </location>
    <ligand>
        <name>[4Fe-4S] cluster</name>
        <dbReference type="ChEBI" id="CHEBI:49883"/>
        <label>2</label>
        <note>4Fe-4S-S-AdoMet</note>
    </ligand>
</feature>
<feature type="binding site" evidence="1">
    <location>
        <position position="163"/>
    </location>
    <ligand>
        <name>[4Fe-4S] cluster</name>
        <dbReference type="ChEBI" id="CHEBI:49883"/>
        <label>2</label>
        <note>4Fe-4S-S-AdoMet</note>
    </ligand>
</feature>
<organism>
    <name type="scientific">Karelsulcia muelleri (strain GWSS)</name>
    <name type="common">Sulcia muelleri</name>
    <dbReference type="NCBI Taxonomy" id="444179"/>
    <lineage>
        <taxon>Bacteria</taxon>
        <taxon>Pseudomonadati</taxon>
        <taxon>Bacteroidota</taxon>
        <taxon>Flavobacteriia</taxon>
        <taxon>Flavobacteriales</taxon>
        <taxon>Candidatus Karelsulcia</taxon>
    </lineage>
</organism>
<accession>A8Z642</accession>
<evidence type="ECO:0000255" key="1">
    <source>
        <dbReference type="HAMAP-Rule" id="MF_01864"/>
    </source>
</evidence>
<evidence type="ECO:0000255" key="2">
    <source>
        <dbReference type="PROSITE-ProRule" id="PRU01266"/>
    </source>
</evidence>
<reference key="1">
    <citation type="journal article" date="2007" name="Proc. Natl. Acad. Sci. U.S.A.">
        <title>Parallel genomic evolution and metabolic interdependence in an ancient symbiosis.</title>
        <authorList>
            <person name="McCutcheon J.P."/>
            <person name="Moran N.A."/>
        </authorList>
    </citation>
    <scope>NUCLEOTIDE SEQUENCE [LARGE SCALE GENOMIC DNA]</scope>
    <source>
        <strain>GWSS</strain>
    </source>
</reference>
<proteinExistence type="inferred from homology"/>
<keyword id="KW-0004">4Fe-4S</keyword>
<keyword id="KW-0963">Cytoplasm</keyword>
<keyword id="KW-0408">Iron</keyword>
<keyword id="KW-0411">Iron-sulfur</keyword>
<keyword id="KW-0479">Metal-binding</keyword>
<keyword id="KW-0949">S-adenosyl-L-methionine</keyword>
<keyword id="KW-0808">Transferase</keyword>
<keyword id="KW-0819">tRNA processing</keyword>
<dbReference type="EC" id="2.8.4.3" evidence="1"/>
<dbReference type="EMBL" id="CP000770">
    <property type="protein sequence ID" value="ABS30593.1"/>
    <property type="molecule type" value="Genomic_DNA"/>
</dbReference>
<dbReference type="SMR" id="A8Z642"/>
<dbReference type="STRING" id="444179.SMGWSS_194"/>
<dbReference type="KEGG" id="smg:SMGWSS_194"/>
<dbReference type="HOGENOM" id="CLU_018697_2_1_10"/>
<dbReference type="Proteomes" id="UP000000781">
    <property type="component" value="Chromosome"/>
</dbReference>
<dbReference type="GO" id="GO:0005829">
    <property type="term" value="C:cytosol"/>
    <property type="evidence" value="ECO:0007669"/>
    <property type="project" value="TreeGrafter"/>
</dbReference>
<dbReference type="GO" id="GO:0051539">
    <property type="term" value="F:4 iron, 4 sulfur cluster binding"/>
    <property type="evidence" value="ECO:0007669"/>
    <property type="project" value="UniProtKB-UniRule"/>
</dbReference>
<dbReference type="GO" id="GO:0046872">
    <property type="term" value="F:metal ion binding"/>
    <property type="evidence" value="ECO:0007669"/>
    <property type="project" value="UniProtKB-KW"/>
</dbReference>
<dbReference type="GO" id="GO:0035597">
    <property type="term" value="F:N6-isopentenyladenosine methylthiotransferase activity"/>
    <property type="evidence" value="ECO:0007669"/>
    <property type="project" value="TreeGrafter"/>
</dbReference>
<dbReference type="FunFam" id="3.40.50.12160:FF:000003">
    <property type="entry name" value="CDK5 regulatory subunit-associated protein 1"/>
    <property type="match status" value="1"/>
</dbReference>
<dbReference type="FunFam" id="3.80.30.20:FF:000001">
    <property type="entry name" value="tRNA-2-methylthio-N(6)-dimethylallyladenosine synthase 2"/>
    <property type="match status" value="1"/>
</dbReference>
<dbReference type="Gene3D" id="3.40.50.12160">
    <property type="entry name" value="Methylthiotransferase, N-terminal domain"/>
    <property type="match status" value="1"/>
</dbReference>
<dbReference type="Gene3D" id="3.80.30.20">
    <property type="entry name" value="tm_1862 like domain"/>
    <property type="match status" value="1"/>
</dbReference>
<dbReference type="HAMAP" id="MF_01864">
    <property type="entry name" value="tRNA_metthiotr_MiaB"/>
    <property type="match status" value="1"/>
</dbReference>
<dbReference type="InterPro" id="IPR006638">
    <property type="entry name" value="Elp3/MiaA/NifB-like_rSAM"/>
</dbReference>
<dbReference type="InterPro" id="IPR005839">
    <property type="entry name" value="Methylthiotransferase"/>
</dbReference>
<dbReference type="InterPro" id="IPR020612">
    <property type="entry name" value="Methylthiotransferase_CS"/>
</dbReference>
<dbReference type="InterPro" id="IPR013848">
    <property type="entry name" value="Methylthiotransferase_N"/>
</dbReference>
<dbReference type="InterPro" id="IPR038135">
    <property type="entry name" value="Methylthiotransferase_N_sf"/>
</dbReference>
<dbReference type="InterPro" id="IPR006463">
    <property type="entry name" value="MiaB_methiolase"/>
</dbReference>
<dbReference type="InterPro" id="IPR007197">
    <property type="entry name" value="rSAM"/>
</dbReference>
<dbReference type="InterPro" id="IPR023404">
    <property type="entry name" value="rSAM_horseshoe"/>
</dbReference>
<dbReference type="InterPro" id="IPR002792">
    <property type="entry name" value="TRAM_dom"/>
</dbReference>
<dbReference type="NCBIfam" id="TIGR01574">
    <property type="entry name" value="miaB-methiolase"/>
    <property type="match status" value="1"/>
</dbReference>
<dbReference type="NCBIfam" id="TIGR00089">
    <property type="entry name" value="MiaB/RimO family radical SAM methylthiotransferase"/>
    <property type="match status" value="1"/>
</dbReference>
<dbReference type="PANTHER" id="PTHR43020">
    <property type="entry name" value="CDK5 REGULATORY SUBUNIT-ASSOCIATED PROTEIN 1"/>
    <property type="match status" value="1"/>
</dbReference>
<dbReference type="PANTHER" id="PTHR43020:SF2">
    <property type="entry name" value="MITOCHONDRIAL TRNA METHYLTHIOTRANSFERASE CDK5RAP1"/>
    <property type="match status" value="1"/>
</dbReference>
<dbReference type="Pfam" id="PF04055">
    <property type="entry name" value="Radical_SAM"/>
    <property type="match status" value="1"/>
</dbReference>
<dbReference type="Pfam" id="PF01938">
    <property type="entry name" value="TRAM"/>
    <property type="match status" value="1"/>
</dbReference>
<dbReference type="Pfam" id="PF00919">
    <property type="entry name" value="UPF0004"/>
    <property type="match status" value="1"/>
</dbReference>
<dbReference type="SFLD" id="SFLDF00273">
    <property type="entry name" value="(dimethylallyl)adenosine_tRNA"/>
    <property type="match status" value="1"/>
</dbReference>
<dbReference type="SFLD" id="SFLDG01082">
    <property type="entry name" value="B12-binding_domain_containing"/>
    <property type="match status" value="1"/>
</dbReference>
<dbReference type="SFLD" id="SFLDF00413">
    <property type="entry name" value="CDK5RAP1"/>
    <property type="match status" value="1"/>
</dbReference>
<dbReference type="SFLD" id="SFLDS00029">
    <property type="entry name" value="Radical_SAM"/>
    <property type="match status" value="1"/>
</dbReference>
<dbReference type="SMART" id="SM00729">
    <property type="entry name" value="Elp3"/>
    <property type="match status" value="1"/>
</dbReference>
<dbReference type="SUPFAM" id="SSF102114">
    <property type="entry name" value="Radical SAM enzymes"/>
    <property type="match status" value="1"/>
</dbReference>
<dbReference type="PROSITE" id="PS51449">
    <property type="entry name" value="MTTASE_N"/>
    <property type="match status" value="1"/>
</dbReference>
<dbReference type="PROSITE" id="PS01278">
    <property type="entry name" value="MTTASE_RADICAL"/>
    <property type="match status" value="1"/>
</dbReference>
<dbReference type="PROSITE" id="PS51918">
    <property type="entry name" value="RADICAL_SAM"/>
    <property type="match status" value="1"/>
</dbReference>
<dbReference type="PROSITE" id="PS50926">
    <property type="entry name" value="TRAM"/>
    <property type="match status" value="1"/>
</dbReference>
<name>MIAB_KARMG</name>